<protein>
    <recommendedName>
        <fullName evidence="1">Small ribosomal subunit protein uS11c</fullName>
    </recommendedName>
    <alternativeName>
        <fullName evidence="2">30S ribosomal protein S11, chloroplastic</fullName>
    </alternativeName>
</protein>
<evidence type="ECO:0000255" key="1">
    <source>
        <dbReference type="HAMAP-Rule" id="MF_01310"/>
    </source>
</evidence>
<evidence type="ECO:0000305" key="2"/>
<comment type="subunit">
    <text evidence="1">Part of the 30S ribosomal subunit.</text>
</comment>
<comment type="subcellular location">
    <subcellularLocation>
        <location>Plastid</location>
        <location>Chloroplast</location>
    </subcellularLocation>
</comment>
<comment type="similarity">
    <text evidence="1">Belongs to the universal ribosomal protein uS11 family.</text>
</comment>
<name>RR11_NEPOL</name>
<proteinExistence type="inferred from homology"/>
<sequence length="130" mass="13831">MARQSKRLAPRRLKRKVSKGVVHIQASFNNTIVTITDSSGGVLAWSSAGACGFRGAKKGTPFAAQTAAETAIRQCIDQGMRQADIIVQGPGNGRETAIRALQLAGVGVSLIRDITSVPHNGCRPPKQRRI</sequence>
<dbReference type="EMBL" id="AF137379">
    <property type="protein sequence ID" value="AAD54789.1"/>
    <property type="molecule type" value="Genomic_DNA"/>
</dbReference>
<dbReference type="RefSeq" id="NP_050818.1">
    <property type="nucleotide sequence ID" value="NC_000927.1"/>
</dbReference>
<dbReference type="SMR" id="Q9TL27"/>
<dbReference type="GeneID" id="802008"/>
<dbReference type="GO" id="GO:0009507">
    <property type="term" value="C:chloroplast"/>
    <property type="evidence" value="ECO:0007669"/>
    <property type="project" value="UniProtKB-SubCell"/>
</dbReference>
<dbReference type="GO" id="GO:1990904">
    <property type="term" value="C:ribonucleoprotein complex"/>
    <property type="evidence" value="ECO:0007669"/>
    <property type="project" value="UniProtKB-KW"/>
</dbReference>
<dbReference type="GO" id="GO:0005840">
    <property type="term" value="C:ribosome"/>
    <property type="evidence" value="ECO:0007669"/>
    <property type="project" value="UniProtKB-KW"/>
</dbReference>
<dbReference type="GO" id="GO:0019843">
    <property type="term" value="F:rRNA binding"/>
    <property type="evidence" value="ECO:0007669"/>
    <property type="project" value="UniProtKB-UniRule"/>
</dbReference>
<dbReference type="GO" id="GO:0003735">
    <property type="term" value="F:structural constituent of ribosome"/>
    <property type="evidence" value="ECO:0007669"/>
    <property type="project" value="InterPro"/>
</dbReference>
<dbReference type="GO" id="GO:0006412">
    <property type="term" value="P:translation"/>
    <property type="evidence" value="ECO:0007669"/>
    <property type="project" value="UniProtKB-UniRule"/>
</dbReference>
<dbReference type="FunFam" id="3.30.420.80:FF:000010">
    <property type="entry name" value="30S ribosomal protein S11"/>
    <property type="match status" value="1"/>
</dbReference>
<dbReference type="Gene3D" id="3.30.420.80">
    <property type="entry name" value="Ribosomal protein S11"/>
    <property type="match status" value="1"/>
</dbReference>
<dbReference type="HAMAP" id="MF_01310">
    <property type="entry name" value="Ribosomal_uS11"/>
    <property type="match status" value="1"/>
</dbReference>
<dbReference type="InterPro" id="IPR001971">
    <property type="entry name" value="Ribosomal_uS11"/>
</dbReference>
<dbReference type="InterPro" id="IPR019981">
    <property type="entry name" value="Ribosomal_uS11_bac-type"/>
</dbReference>
<dbReference type="InterPro" id="IPR018102">
    <property type="entry name" value="Ribosomal_uS11_CS"/>
</dbReference>
<dbReference type="InterPro" id="IPR036967">
    <property type="entry name" value="Ribosomal_uS11_sf"/>
</dbReference>
<dbReference type="NCBIfam" id="NF003698">
    <property type="entry name" value="PRK05309.1"/>
    <property type="match status" value="1"/>
</dbReference>
<dbReference type="NCBIfam" id="TIGR03632">
    <property type="entry name" value="uS11_bact"/>
    <property type="match status" value="1"/>
</dbReference>
<dbReference type="PANTHER" id="PTHR11759">
    <property type="entry name" value="40S RIBOSOMAL PROTEIN S14/30S RIBOSOMAL PROTEIN S11"/>
    <property type="match status" value="1"/>
</dbReference>
<dbReference type="Pfam" id="PF00411">
    <property type="entry name" value="Ribosomal_S11"/>
    <property type="match status" value="1"/>
</dbReference>
<dbReference type="PIRSF" id="PIRSF002131">
    <property type="entry name" value="Ribosomal_S11"/>
    <property type="match status" value="1"/>
</dbReference>
<dbReference type="SUPFAM" id="SSF53137">
    <property type="entry name" value="Translational machinery components"/>
    <property type="match status" value="1"/>
</dbReference>
<dbReference type="PROSITE" id="PS00054">
    <property type="entry name" value="RIBOSOMAL_S11"/>
    <property type="match status" value="1"/>
</dbReference>
<keyword id="KW-0150">Chloroplast</keyword>
<keyword id="KW-0934">Plastid</keyword>
<keyword id="KW-0687">Ribonucleoprotein</keyword>
<keyword id="KW-0689">Ribosomal protein</keyword>
<keyword id="KW-0694">RNA-binding</keyword>
<keyword id="KW-0699">rRNA-binding</keyword>
<gene>
    <name evidence="1" type="primary">rps11</name>
</gene>
<geneLocation type="chloroplast"/>
<accession>Q9TL27</accession>
<reference key="1">
    <citation type="journal article" date="1999" name="Proc. Natl. Acad. Sci. U.S.A.">
        <title>The complete chloroplast DNA sequence of the green alga Nephroselmis olivacea: insights into the architecture of ancestral chloroplast genomes.</title>
        <authorList>
            <person name="Turmel M."/>
            <person name="Otis C."/>
            <person name="Lemieux C."/>
        </authorList>
    </citation>
    <scope>NUCLEOTIDE SEQUENCE [LARGE SCALE GENOMIC DNA]</scope>
    <source>
        <strain>NIES-484 / S-N-5-8</strain>
    </source>
</reference>
<feature type="chain" id="PRO_0000123310" description="Small ribosomal subunit protein uS11c">
    <location>
        <begin position="1"/>
        <end position="130"/>
    </location>
</feature>
<organism>
    <name type="scientific">Nephroselmis olivacea</name>
    <name type="common">Green alga</name>
    <dbReference type="NCBI Taxonomy" id="31312"/>
    <lineage>
        <taxon>Eukaryota</taxon>
        <taxon>Viridiplantae</taxon>
        <taxon>Chlorophyta</taxon>
        <taxon>Nephroselmidophyceae</taxon>
        <taxon>Nephroselmidales</taxon>
        <taxon>Nephroselmidaceae</taxon>
        <taxon>Nephroselmis</taxon>
    </lineage>
</organism>